<sequence>MIKLVLIRHGQSLWNLENRFTGWTDVDLSENGLSEAREAGAILKKNGYTFDVAYTSVLKRAIRTLWIVLHEMDLAWVPVHKCWKLNERHYGALQGLNKDETAKKYGEEQVHIWRRSIDVRPPALTEDDPRYEMNDLRYKALKKGEFPLTECLVDTEKRVLDYWHSEIAPKLKNGNKVIISSHGNTIRSLVKYLDNLSSDGVVSLNIPTSIPLVYELDENLRPIRHYYLSMDGEVPEGEIPKHITF</sequence>
<reference key="1">
    <citation type="journal article" date="2003" name="Nature">
        <title>The genome sequence of Bacillus anthracis Ames and comparison to closely related bacteria.</title>
        <authorList>
            <person name="Read T.D."/>
            <person name="Peterson S.N."/>
            <person name="Tourasse N.J."/>
            <person name="Baillie L.W."/>
            <person name="Paulsen I.T."/>
            <person name="Nelson K.E."/>
            <person name="Tettelin H."/>
            <person name="Fouts D.E."/>
            <person name="Eisen J.A."/>
            <person name="Gill S.R."/>
            <person name="Holtzapple E.K."/>
            <person name="Okstad O.A."/>
            <person name="Helgason E."/>
            <person name="Rilstone J."/>
            <person name="Wu M."/>
            <person name="Kolonay J.F."/>
            <person name="Beanan M.J."/>
            <person name="Dodson R.J."/>
            <person name="Brinkac L.M."/>
            <person name="Gwinn M.L."/>
            <person name="DeBoy R.T."/>
            <person name="Madpu R."/>
            <person name="Daugherty S.C."/>
            <person name="Durkin A.S."/>
            <person name="Haft D.H."/>
            <person name="Nelson W.C."/>
            <person name="Peterson J.D."/>
            <person name="Pop M."/>
            <person name="Khouri H.M."/>
            <person name="Radune D."/>
            <person name="Benton J.L."/>
            <person name="Mahamoud Y."/>
            <person name="Jiang L."/>
            <person name="Hance I.R."/>
            <person name="Weidman J.F."/>
            <person name="Berry K.J."/>
            <person name="Plaut R.D."/>
            <person name="Wolf A.M."/>
            <person name="Watkins K.L."/>
            <person name="Nierman W.C."/>
            <person name="Hazen A."/>
            <person name="Cline R.T."/>
            <person name="Redmond C."/>
            <person name="Thwaite J.E."/>
            <person name="White O."/>
            <person name="Salzberg S.L."/>
            <person name="Thomason B."/>
            <person name="Friedlander A.M."/>
            <person name="Koehler T.M."/>
            <person name="Hanna P.C."/>
            <person name="Kolstoe A.-B."/>
            <person name="Fraser C.M."/>
        </authorList>
    </citation>
    <scope>NUCLEOTIDE SEQUENCE [LARGE SCALE GENOMIC DNA]</scope>
    <source>
        <strain>Ames / isolate Porton</strain>
    </source>
</reference>
<reference key="2">
    <citation type="journal article" date="2009" name="J. Bacteriol.">
        <title>The complete genome sequence of Bacillus anthracis Ames 'Ancestor'.</title>
        <authorList>
            <person name="Ravel J."/>
            <person name="Jiang L."/>
            <person name="Stanley S.T."/>
            <person name="Wilson M.R."/>
            <person name="Decker R.S."/>
            <person name="Read T.D."/>
            <person name="Worsham P."/>
            <person name="Keim P.S."/>
            <person name="Salzberg S.L."/>
            <person name="Fraser-Liggett C.M."/>
            <person name="Rasko D.A."/>
        </authorList>
    </citation>
    <scope>NUCLEOTIDE SEQUENCE [LARGE SCALE GENOMIC DNA]</scope>
    <source>
        <strain>Ames ancestor</strain>
    </source>
</reference>
<reference key="3">
    <citation type="submission" date="2004-01" db="EMBL/GenBank/DDBJ databases">
        <title>Complete genome sequence of Bacillus anthracis Sterne.</title>
        <authorList>
            <person name="Brettin T.S."/>
            <person name="Bruce D."/>
            <person name="Challacombe J.F."/>
            <person name="Gilna P."/>
            <person name="Han C."/>
            <person name="Hill K."/>
            <person name="Hitchcock P."/>
            <person name="Jackson P."/>
            <person name="Keim P."/>
            <person name="Longmire J."/>
            <person name="Lucas S."/>
            <person name="Okinaka R."/>
            <person name="Richardson P."/>
            <person name="Rubin E."/>
            <person name="Tice H."/>
        </authorList>
    </citation>
    <scope>NUCLEOTIDE SEQUENCE [LARGE SCALE GENOMIC DNA]</scope>
    <source>
        <strain>Sterne</strain>
    </source>
</reference>
<name>GPMA_BACAN</name>
<keyword id="KW-0312">Gluconeogenesis</keyword>
<keyword id="KW-0324">Glycolysis</keyword>
<keyword id="KW-0413">Isomerase</keyword>
<keyword id="KW-1185">Reference proteome</keyword>
<evidence type="ECO:0000255" key="1">
    <source>
        <dbReference type="HAMAP-Rule" id="MF_01039"/>
    </source>
</evidence>
<gene>
    <name evidence="1" type="primary">gpmA</name>
    <name type="synonym">gpm</name>
    <name type="ordered locus">BA_2488</name>
    <name type="ordered locus">GBAA_2488</name>
    <name type="ordered locus">BAS2313</name>
</gene>
<dbReference type="EC" id="5.4.2.11" evidence="1"/>
<dbReference type="EMBL" id="AE016879">
    <property type="protein sequence ID" value="AAP26349.1"/>
    <property type="molecule type" value="Genomic_DNA"/>
</dbReference>
<dbReference type="EMBL" id="AE017334">
    <property type="protein sequence ID" value="AAT31602.1"/>
    <property type="molecule type" value="Genomic_DNA"/>
</dbReference>
<dbReference type="EMBL" id="AE017225">
    <property type="protein sequence ID" value="AAT54625.1"/>
    <property type="molecule type" value="Genomic_DNA"/>
</dbReference>
<dbReference type="RefSeq" id="NP_844863.1">
    <property type="nucleotide sequence ID" value="NC_003997.3"/>
</dbReference>
<dbReference type="RefSeq" id="WP_000594139.1">
    <property type="nucleotide sequence ID" value="NZ_WXXJ01000008.1"/>
</dbReference>
<dbReference type="RefSeq" id="YP_028574.1">
    <property type="nucleotide sequence ID" value="NC_005945.1"/>
</dbReference>
<dbReference type="SMR" id="Q6KSL4"/>
<dbReference type="STRING" id="261594.GBAA_2488"/>
<dbReference type="DNASU" id="1084851"/>
<dbReference type="GeneID" id="45022358"/>
<dbReference type="KEGG" id="ban:BA_2488"/>
<dbReference type="KEGG" id="banh:HYU01_12365"/>
<dbReference type="KEGG" id="bar:GBAA_2488"/>
<dbReference type="KEGG" id="bat:BAS2313"/>
<dbReference type="PATRIC" id="fig|198094.11.peg.2460"/>
<dbReference type="eggNOG" id="COG0588">
    <property type="taxonomic scope" value="Bacteria"/>
</dbReference>
<dbReference type="HOGENOM" id="CLU_033323_1_1_9"/>
<dbReference type="OMA" id="MLPYWYD"/>
<dbReference type="OrthoDB" id="9781415at2"/>
<dbReference type="UniPathway" id="UPA00109">
    <property type="reaction ID" value="UER00186"/>
</dbReference>
<dbReference type="Proteomes" id="UP000000427">
    <property type="component" value="Chromosome"/>
</dbReference>
<dbReference type="Proteomes" id="UP000000594">
    <property type="component" value="Chromosome"/>
</dbReference>
<dbReference type="GO" id="GO:0004619">
    <property type="term" value="F:phosphoglycerate mutase activity"/>
    <property type="evidence" value="ECO:0007669"/>
    <property type="project" value="UniProtKB-EC"/>
</dbReference>
<dbReference type="GO" id="GO:0006094">
    <property type="term" value="P:gluconeogenesis"/>
    <property type="evidence" value="ECO:0007669"/>
    <property type="project" value="UniProtKB-UniRule"/>
</dbReference>
<dbReference type="GO" id="GO:0006096">
    <property type="term" value="P:glycolytic process"/>
    <property type="evidence" value="ECO:0007669"/>
    <property type="project" value="UniProtKB-UniRule"/>
</dbReference>
<dbReference type="CDD" id="cd07067">
    <property type="entry name" value="HP_PGM_like"/>
    <property type="match status" value="1"/>
</dbReference>
<dbReference type="FunFam" id="3.40.50.1240:FF:000003">
    <property type="entry name" value="2,3-bisphosphoglycerate-dependent phosphoglycerate mutase"/>
    <property type="match status" value="1"/>
</dbReference>
<dbReference type="Gene3D" id="3.40.50.1240">
    <property type="entry name" value="Phosphoglycerate mutase-like"/>
    <property type="match status" value="1"/>
</dbReference>
<dbReference type="HAMAP" id="MF_01039">
    <property type="entry name" value="PGAM_GpmA"/>
    <property type="match status" value="1"/>
</dbReference>
<dbReference type="InterPro" id="IPR013078">
    <property type="entry name" value="His_Pase_superF_clade-1"/>
</dbReference>
<dbReference type="InterPro" id="IPR029033">
    <property type="entry name" value="His_PPase_superfam"/>
</dbReference>
<dbReference type="InterPro" id="IPR001345">
    <property type="entry name" value="PG/BPGM_mutase_AS"/>
</dbReference>
<dbReference type="InterPro" id="IPR005952">
    <property type="entry name" value="Phosphogly_mut1"/>
</dbReference>
<dbReference type="NCBIfam" id="TIGR01258">
    <property type="entry name" value="pgm_1"/>
    <property type="match status" value="1"/>
</dbReference>
<dbReference type="NCBIfam" id="NF010713">
    <property type="entry name" value="PRK14115.1"/>
    <property type="match status" value="1"/>
</dbReference>
<dbReference type="PANTHER" id="PTHR11931">
    <property type="entry name" value="PHOSPHOGLYCERATE MUTASE"/>
    <property type="match status" value="1"/>
</dbReference>
<dbReference type="Pfam" id="PF00300">
    <property type="entry name" value="His_Phos_1"/>
    <property type="match status" value="1"/>
</dbReference>
<dbReference type="PIRSF" id="PIRSF000709">
    <property type="entry name" value="6PFK_2-Ptase"/>
    <property type="match status" value="1"/>
</dbReference>
<dbReference type="SMART" id="SM00855">
    <property type="entry name" value="PGAM"/>
    <property type="match status" value="1"/>
</dbReference>
<dbReference type="SUPFAM" id="SSF53254">
    <property type="entry name" value="Phosphoglycerate mutase-like"/>
    <property type="match status" value="1"/>
</dbReference>
<dbReference type="PROSITE" id="PS00175">
    <property type="entry name" value="PG_MUTASE"/>
    <property type="match status" value="1"/>
</dbReference>
<feature type="chain" id="PRO_0000179842" description="2,3-bisphosphoglycerate-dependent phosphoglycerate mutase">
    <location>
        <begin position="1"/>
        <end position="245"/>
    </location>
</feature>
<feature type="active site" description="Tele-phosphohistidine intermediate" evidence="1">
    <location>
        <position position="9"/>
    </location>
</feature>
<feature type="active site" description="Proton donor/acceptor" evidence="1">
    <location>
        <position position="87"/>
    </location>
</feature>
<feature type="binding site" evidence="1">
    <location>
        <begin position="8"/>
        <end position="15"/>
    </location>
    <ligand>
        <name>substrate</name>
    </ligand>
</feature>
<feature type="binding site" evidence="1">
    <location>
        <begin position="21"/>
        <end position="22"/>
    </location>
    <ligand>
        <name>substrate</name>
    </ligand>
</feature>
<feature type="binding site" evidence="1">
    <location>
        <position position="60"/>
    </location>
    <ligand>
        <name>substrate</name>
    </ligand>
</feature>
<feature type="binding site" evidence="1">
    <location>
        <begin position="87"/>
        <end position="90"/>
    </location>
    <ligand>
        <name>substrate</name>
    </ligand>
</feature>
<feature type="binding site" evidence="1">
    <location>
        <position position="98"/>
    </location>
    <ligand>
        <name>substrate</name>
    </ligand>
</feature>
<feature type="binding site" evidence="1">
    <location>
        <begin position="114"/>
        <end position="115"/>
    </location>
    <ligand>
        <name>substrate</name>
    </ligand>
</feature>
<feature type="binding site" evidence="1">
    <location>
        <begin position="183"/>
        <end position="184"/>
    </location>
    <ligand>
        <name>substrate</name>
    </ligand>
</feature>
<feature type="site" description="Transition state stabilizer" evidence="1">
    <location>
        <position position="182"/>
    </location>
</feature>
<accession>Q6KSL4</accession>
<accession>Q6HYL4</accession>
<accession>Q81QD8</accession>
<organism>
    <name type="scientific">Bacillus anthracis</name>
    <dbReference type="NCBI Taxonomy" id="1392"/>
    <lineage>
        <taxon>Bacteria</taxon>
        <taxon>Bacillati</taxon>
        <taxon>Bacillota</taxon>
        <taxon>Bacilli</taxon>
        <taxon>Bacillales</taxon>
        <taxon>Bacillaceae</taxon>
        <taxon>Bacillus</taxon>
        <taxon>Bacillus cereus group</taxon>
    </lineage>
</organism>
<comment type="function">
    <text evidence="1">Catalyzes the interconversion of 2-phosphoglycerate and 3-phosphoglycerate.</text>
</comment>
<comment type="catalytic activity">
    <reaction evidence="1">
        <text>(2R)-2-phosphoglycerate = (2R)-3-phosphoglycerate</text>
        <dbReference type="Rhea" id="RHEA:15901"/>
        <dbReference type="ChEBI" id="CHEBI:58272"/>
        <dbReference type="ChEBI" id="CHEBI:58289"/>
        <dbReference type="EC" id="5.4.2.11"/>
    </reaction>
</comment>
<comment type="pathway">
    <text evidence="1">Carbohydrate degradation; glycolysis; pyruvate from D-glyceraldehyde 3-phosphate: step 3/5.</text>
</comment>
<comment type="similarity">
    <text evidence="1">Belongs to the phosphoglycerate mutase family. BPG-dependent PGAM subfamily.</text>
</comment>
<protein>
    <recommendedName>
        <fullName evidence="1">2,3-bisphosphoglycerate-dependent phosphoglycerate mutase</fullName>
        <shortName evidence="1">BPG-dependent PGAM</shortName>
        <shortName evidence="1">PGAM</shortName>
        <shortName evidence="1">Phosphoglyceromutase</shortName>
        <shortName evidence="1">dPGM</shortName>
        <ecNumber evidence="1">5.4.2.11</ecNumber>
    </recommendedName>
</protein>
<proteinExistence type="inferred from homology"/>